<accession>Q466X7</accession>
<proteinExistence type="inferred from homology"/>
<feature type="chain" id="PRO_1000066762" description="UPF0210 protein Mbar_A3181">
    <location>
        <begin position="1"/>
        <end position="453"/>
    </location>
</feature>
<reference key="1">
    <citation type="journal article" date="2006" name="J. Bacteriol.">
        <title>The Methanosarcina barkeri genome: comparative analysis with Methanosarcina acetivorans and Methanosarcina mazei reveals extensive rearrangement within methanosarcinal genomes.</title>
        <authorList>
            <person name="Maeder D.L."/>
            <person name="Anderson I."/>
            <person name="Brettin T.S."/>
            <person name="Bruce D.C."/>
            <person name="Gilna P."/>
            <person name="Han C.S."/>
            <person name="Lapidus A."/>
            <person name="Metcalf W.W."/>
            <person name="Saunders E."/>
            <person name="Tapia R."/>
            <person name="Sowers K.R."/>
        </authorList>
    </citation>
    <scope>NUCLEOTIDE SEQUENCE [LARGE SCALE GENOMIC DNA]</scope>
    <source>
        <strain>Fusaro / DSM 804</strain>
    </source>
</reference>
<gene>
    <name type="ordered locus">Mbar_A3181</name>
</gene>
<dbReference type="EMBL" id="CP000099">
    <property type="protein sequence ID" value="AAZ72065.1"/>
    <property type="molecule type" value="Genomic_DNA"/>
</dbReference>
<dbReference type="SMR" id="Q466X7"/>
<dbReference type="STRING" id="269797.Mbar_A3181"/>
<dbReference type="PaxDb" id="269797-Mbar_A3181"/>
<dbReference type="KEGG" id="mba:Mbar_A3181"/>
<dbReference type="eggNOG" id="arCOG04321">
    <property type="taxonomic scope" value="Archaea"/>
</dbReference>
<dbReference type="HOGENOM" id="CLU_048704_0_0_2"/>
<dbReference type="OrthoDB" id="21376at2157"/>
<dbReference type="CDD" id="cd08025">
    <property type="entry name" value="RNR_PFL_like_DUF711"/>
    <property type="match status" value="1"/>
</dbReference>
<dbReference type="Gene3D" id="3.20.70.20">
    <property type="match status" value="1"/>
</dbReference>
<dbReference type="HAMAP" id="MF_01221">
    <property type="entry name" value="UPF0210"/>
    <property type="match status" value="1"/>
</dbReference>
<dbReference type="InterPro" id="IPR007841">
    <property type="entry name" value="UPF0210"/>
</dbReference>
<dbReference type="NCBIfam" id="NF003700">
    <property type="entry name" value="PRK05313.1"/>
    <property type="match status" value="1"/>
</dbReference>
<dbReference type="PANTHER" id="PTHR37560:SF1">
    <property type="entry name" value="UPF0210 PROTEIN MJ1665"/>
    <property type="match status" value="1"/>
</dbReference>
<dbReference type="PANTHER" id="PTHR37560">
    <property type="entry name" value="UPF0210 PROTEIN SPR0218"/>
    <property type="match status" value="1"/>
</dbReference>
<dbReference type="Pfam" id="PF05167">
    <property type="entry name" value="DUF711"/>
    <property type="match status" value="1"/>
</dbReference>
<dbReference type="SUPFAM" id="SSF51998">
    <property type="entry name" value="PFL-like glycyl radical enzymes"/>
    <property type="match status" value="1"/>
</dbReference>
<evidence type="ECO:0000255" key="1">
    <source>
        <dbReference type="HAMAP-Rule" id="MF_01221"/>
    </source>
</evidence>
<name>Y3181_METBF</name>
<protein>
    <recommendedName>
        <fullName evidence="1">UPF0210 protein Mbar_A3181</fullName>
    </recommendedName>
</protein>
<organism>
    <name type="scientific">Methanosarcina barkeri (strain Fusaro / DSM 804)</name>
    <dbReference type="NCBI Taxonomy" id="269797"/>
    <lineage>
        <taxon>Archaea</taxon>
        <taxon>Methanobacteriati</taxon>
        <taxon>Methanobacteriota</taxon>
        <taxon>Stenosarchaea group</taxon>
        <taxon>Methanomicrobia</taxon>
        <taxon>Methanosarcinales</taxon>
        <taxon>Methanosarcinaceae</taxon>
        <taxon>Methanosarcina</taxon>
    </lineage>
</organism>
<comment type="similarity">
    <text evidence="1">Belongs to the UPF0210 family.</text>
</comment>
<sequence>MYINPKEILETIQMVRMEHLDIRTVTMGISLRDCSHPDIEVFNENIYEKITTRAKELVRTTNEIQSLYGIPIINKRISVTPIAVAAESCRAPDFVSIAKTMDEAAKDAQVDFIGGFSALVHKGATVGDLKLINSIPEALKSTEKVCSSINVATTKTGINMDAVGLMGSIIKKTADLTADRDGIGCAKLVVFANAPEDNPFMAGAFHGIGEPECVINVGVSGPGVVNAAIRELENPNLTEISETIKKTAFKITRMGEMVGREVSRRLGVEFGILDLSLAPTPAIGDSVAAILEAMGLERCGAHGTTAALALLNDAVKKGGAMASSSVGGLSGAFIPVSEDAGMIEAVRAGALNLEKLEAMTSVCSVGLDMIAVPGDTPASTLSAIIADEMAIGVINRKTTAVRVIPAPGKRVGDSVEFGGLLGNAPIMPLSNFSSETFVKRGGRIPAPIQSLTN</sequence>